<keyword id="KW-0007">Acetylation</keyword>
<keyword id="KW-0025">Alternative splicing</keyword>
<keyword id="KW-1003">Cell membrane</keyword>
<keyword id="KW-0472">Membrane</keyword>
<keyword id="KW-0488">Methylation</keyword>
<keyword id="KW-0597">Phosphoprotein</keyword>
<keyword id="KW-1267">Proteomics identification</keyword>
<keyword id="KW-1185">Reference proteome</keyword>
<keyword id="KW-0812">Transmembrane</keyword>
<keyword id="KW-1133">Transmembrane helix</keyword>
<gene>
    <name type="primary">ANO8</name>
    <name type="synonym">KIAA1623</name>
    <name type="synonym">TMEM16H</name>
</gene>
<organism>
    <name type="scientific">Homo sapiens</name>
    <name type="common">Human</name>
    <dbReference type="NCBI Taxonomy" id="9606"/>
    <lineage>
        <taxon>Eukaryota</taxon>
        <taxon>Metazoa</taxon>
        <taxon>Chordata</taxon>
        <taxon>Craniata</taxon>
        <taxon>Vertebrata</taxon>
        <taxon>Euteleostomi</taxon>
        <taxon>Mammalia</taxon>
        <taxon>Eutheria</taxon>
        <taxon>Euarchontoglires</taxon>
        <taxon>Primates</taxon>
        <taxon>Haplorrhini</taxon>
        <taxon>Catarrhini</taxon>
        <taxon>Hominidae</taxon>
        <taxon>Homo</taxon>
    </lineage>
</organism>
<name>ANO8_HUMAN</name>
<feature type="initiator methionine" description="Removed" evidence="9">
    <location>
        <position position="1"/>
    </location>
</feature>
<feature type="chain" id="PRO_0000249003" description="Anoctamin-8">
    <location>
        <begin position="2"/>
        <end position="1232"/>
    </location>
</feature>
<feature type="topological domain" description="Extracellular" evidence="2">
    <location>
        <begin position="2"/>
        <end position="244"/>
    </location>
</feature>
<feature type="transmembrane region" description="Helical" evidence="2">
    <location>
        <begin position="245"/>
        <end position="265"/>
    </location>
</feature>
<feature type="topological domain" description="Cytoplasmic" evidence="2">
    <location>
        <begin position="266"/>
        <end position="281"/>
    </location>
</feature>
<feature type="transmembrane region" description="Helical" evidence="2">
    <location>
        <begin position="282"/>
        <end position="302"/>
    </location>
</feature>
<feature type="topological domain" description="Extracellular" evidence="2">
    <location>
        <begin position="303"/>
        <end position="356"/>
    </location>
</feature>
<feature type="transmembrane region" description="Helical" evidence="2">
    <location>
        <begin position="357"/>
        <end position="377"/>
    </location>
</feature>
<feature type="topological domain" description="Cytoplasmic" evidence="2">
    <location>
        <begin position="378"/>
        <end position="400"/>
    </location>
</feature>
<feature type="transmembrane region" description="Helical" evidence="2">
    <location>
        <begin position="401"/>
        <end position="421"/>
    </location>
</feature>
<feature type="topological domain" description="Extracellular" evidence="2">
    <location>
        <begin position="422"/>
        <end position="437"/>
    </location>
</feature>
<feature type="transmembrane region" description="Helical" evidence="2">
    <location>
        <begin position="438"/>
        <end position="458"/>
    </location>
</feature>
<feature type="topological domain" description="Cytoplasmic" evidence="2">
    <location>
        <begin position="459"/>
        <end position="750"/>
    </location>
</feature>
<feature type="transmembrane region" description="Helical" evidence="2">
    <location>
        <begin position="751"/>
        <end position="771"/>
    </location>
</feature>
<feature type="topological domain" description="Extracellular" evidence="2">
    <location>
        <begin position="772"/>
        <end position="807"/>
    </location>
</feature>
<feature type="transmembrane region" description="Helical" evidence="2">
    <location>
        <begin position="808"/>
        <end position="828"/>
    </location>
</feature>
<feature type="topological domain" description="Cytoplasmic" evidence="2">
    <location>
        <begin position="829"/>
        <end position="841"/>
    </location>
</feature>
<feature type="transmembrane region" description="Helical" evidence="2">
    <location>
        <begin position="842"/>
        <end position="862"/>
    </location>
</feature>
<feature type="topological domain" description="Extracellular" evidence="2">
    <location>
        <begin position="863"/>
        <end position="1232"/>
    </location>
</feature>
<feature type="region of interest" description="Disordered" evidence="3">
    <location>
        <begin position="1"/>
        <end position="32"/>
    </location>
</feature>
<feature type="region of interest" description="Disordered" evidence="3">
    <location>
        <begin position="524"/>
        <end position="650"/>
    </location>
</feature>
<feature type="region of interest" description="Disordered" evidence="3">
    <location>
        <begin position="681"/>
        <end position="728"/>
    </location>
</feature>
<feature type="region of interest" description="Disordered" evidence="3">
    <location>
        <begin position="888"/>
        <end position="970"/>
    </location>
</feature>
<feature type="region of interest" description="Disordered" evidence="3">
    <location>
        <begin position="997"/>
        <end position="1152"/>
    </location>
</feature>
<feature type="region of interest" description="Disordered" evidence="3">
    <location>
        <begin position="1174"/>
        <end position="1232"/>
    </location>
</feature>
<feature type="compositionally biased region" description="Basic and acidic residues" evidence="3">
    <location>
        <begin position="14"/>
        <end position="23"/>
    </location>
</feature>
<feature type="compositionally biased region" description="Gly residues" evidence="3">
    <location>
        <begin position="532"/>
        <end position="551"/>
    </location>
</feature>
<feature type="compositionally biased region" description="Acidic residues" evidence="3">
    <location>
        <begin position="582"/>
        <end position="606"/>
    </location>
</feature>
<feature type="compositionally biased region" description="Basic and acidic residues" evidence="3">
    <location>
        <begin position="904"/>
        <end position="932"/>
    </location>
</feature>
<feature type="compositionally biased region" description="Low complexity" evidence="3">
    <location>
        <begin position="933"/>
        <end position="953"/>
    </location>
</feature>
<feature type="compositionally biased region" description="Low complexity" evidence="3">
    <location>
        <begin position="997"/>
        <end position="1006"/>
    </location>
</feature>
<feature type="compositionally biased region" description="Basic and acidic residues" evidence="3">
    <location>
        <begin position="1031"/>
        <end position="1043"/>
    </location>
</feature>
<feature type="compositionally biased region" description="Polar residues" evidence="3">
    <location>
        <begin position="1078"/>
        <end position="1087"/>
    </location>
</feature>
<feature type="compositionally biased region" description="Pro residues" evidence="3">
    <location>
        <begin position="1130"/>
        <end position="1145"/>
    </location>
</feature>
<feature type="compositionally biased region" description="Pro residues" evidence="3">
    <location>
        <begin position="1197"/>
        <end position="1221"/>
    </location>
</feature>
<feature type="modified residue" description="N-acetylalanine" evidence="9">
    <location>
        <position position="2"/>
    </location>
</feature>
<feature type="modified residue" description="Phosphoserine" evidence="1">
    <location>
        <position position="318"/>
    </location>
</feature>
<feature type="modified residue" description="Phosphoserine" evidence="1">
    <location>
        <position position="669"/>
    </location>
</feature>
<feature type="modified residue" description="Phosphoserine; by FAM20C" evidence="7">
    <location>
        <position position="801"/>
    </location>
</feature>
<feature type="modified residue" description="Asymmetric dimethylarginine; alternate" evidence="1">
    <location>
        <position position="1020"/>
    </location>
</feature>
<feature type="modified residue" description="Omega-N-methylarginine; alternate" evidence="1">
    <location>
        <position position="1020"/>
    </location>
</feature>
<feature type="splice variant" id="VSP_020351" description="In isoform 2." evidence="8">
    <original>TAL</original>
    <variation>HKL</variation>
    <location>
        <begin position="1112"/>
        <end position="1114"/>
    </location>
</feature>
<feature type="splice variant" id="VSP_020352" description="In isoform 2." evidence="8">
    <location>
        <begin position="1115"/>
        <end position="1232"/>
    </location>
</feature>
<reference key="1">
    <citation type="journal article" date="2000" name="DNA Res.">
        <title>Prediction of the coding sequences of unidentified human genes. XVIII. The complete sequences of 100 new cDNA clones from brain which code for large proteins in vitro.</title>
        <authorList>
            <person name="Nagase T."/>
            <person name="Kikuno R."/>
            <person name="Nakayama M."/>
            <person name="Hirosawa M."/>
            <person name="Ohara O."/>
        </authorList>
    </citation>
    <scope>NUCLEOTIDE SEQUENCE [LARGE SCALE MRNA] (ISOFORM 1)</scope>
    <source>
        <tissue>Brain</tissue>
    </source>
</reference>
<reference key="2">
    <citation type="journal article" date="2002" name="DNA Res.">
        <title>Construction of expression-ready cDNA clones for KIAA genes: manual curation of 330 KIAA cDNA clones.</title>
        <authorList>
            <person name="Nakajima D."/>
            <person name="Okazaki N."/>
            <person name="Yamakawa H."/>
            <person name="Kikuno R."/>
            <person name="Ohara O."/>
            <person name="Nagase T."/>
        </authorList>
    </citation>
    <scope>SEQUENCE REVISION</scope>
</reference>
<reference key="3">
    <citation type="journal article" date="2004" name="Nature">
        <title>The DNA sequence and biology of human chromosome 19.</title>
        <authorList>
            <person name="Grimwood J."/>
            <person name="Gordon L.A."/>
            <person name="Olsen A.S."/>
            <person name="Terry A."/>
            <person name="Schmutz J."/>
            <person name="Lamerdin J.E."/>
            <person name="Hellsten U."/>
            <person name="Goodstein D."/>
            <person name="Couronne O."/>
            <person name="Tran-Gyamfi M."/>
            <person name="Aerts A."/>
            <person name="Altherr M."/>
            <person name="Ashworth L."/>
            <person name="Bajorek E."/>
            <person name="Black S."/>
            <person name="Branscomb E."/>
            <person name="Caenepeel S."/>
            <person name="Carrano A.V."/>
            <person name="Caoile C."/>
            <person name="Chan Y.M."/>
            <person name="Christensen M."/>
            <person name="Cleland C.A."/>
            <person name="Copeland A."/>
            <person name="Dalin E."/>
            <person name="Dehal P."/>
            <person name="Denys M."/>
            <person name="Detter J.C."/>
            <person name="Escobar J."/>
            <person name="Flowers D."/>
            <person name="Fotopulos D."/>
            <person name="Garcia C."/>
            <person name="Georgescu A.M."/>
            <person name="Glavina T."/>
            <person name="Gomez M."/>
            <person name="Gonzales E."/>
            <person name="Groza M."/>
            <person name="Hammon N."/>
            <person name="Hawkins T."/>
            <person name="Haydu L."/>
            <person name="Ho I."/>
            <person name="Huang W."/>
            <person name="Israni S."/>
            <person name="Jett J."/>
            <person name="Kadner K."/>
            <person name="Kimball H."/>
            <person name="Kobayashi A."/>
            <person name="Larionov V."/>
            <person name="Leem S.-H."/>
            <person name="Lopez F."/>
            <person name="Lou Y."/>
            <person name="Lowry S."/>
            <person name="Malfatti S."/>
            <person name="Martinez D."/>
            <person name="McCready P.M."/>
            <person name="Medina C."/>
            <person name="Morgan J."/>
            <person name="Nelson K."/>
            <person name="Nolan M."/>
            <person name="Ovcharenko I."/>
            <person name="Pitluck S."/>
            <person name="Pollard M."/>
            <person name="Popkie A.P."/>
            <person name="Predki P."/>
            <person name="Quan G."/>
            <person name="Ramirez L."/>
            <person name="Rash S."/>
            <person name="Retterer J."/>
            <person name="Rodriguez A."/>
            <person name="Rogers S."/>
            <person name="Salamov A."/>
            <person name="Salazar A."/>
            <person name="She X."/>
            <person name="Smith D."/>
            <person name="Slezak T."/>
            <person name="Solovyev V."/>
            <person name="Thayer N."/>
            <person name="Tice H."/>
            <person name="Tsai M."/>
            <person name="Ustaszewska A."/>
            <person name="Vo N."/>
            <person name="Wagner M."/>
            <person name="Wheeler J."/>
            <person name="Wu K."/>
            <person name="Xie G."/>
            <person name="Yang J."/>
            <person name="Dubchak I."/>
            <person name="Furey T.S."/>
            <person name="DeJong P."/>
            <person name="Dickson M."/>
            <person name="Gordon D."/>
            <person name="Eichler E.E."/>
            <person name="Pennacchio L.A."/>
            <person name="Richardson P."/>
            <person name="Stubbs L."/>
            <person name="Rokhsar D.S."/>
            <person name="Myers R.M."/>
            <person name="Rubin E.M."/>
            <person name="Lucas S.M."/>
        </authorList>
    </citation>
    <scope>NUCLEOTIDE SEQUENCE [LARGE SCALE GENOMIC DNA]</scope>
</reference>
<reference key="4">
    <citation type="submission" date="2005-07" db="EMBL/GenBank/DDBJ databases">
        <authorList>
            <person name="Mural R.J."/>
            <person name="Istrail S."/>
            <person name="Sutton G.G."/>
            <person name="Florea L."/>
            <person name="Halpern A.L."/>
            <person name="Mobarry C.M."/>
            <person name="Lippert R."/>
            <person name="Walenz B."/>
            <person name="Shatkay H."/>
            <person name="Dew I."/>
            <person name="Miller J.R."/>
            <person name="Flanigan M.J."/>
            <person name="Edwards N.J."/>
            <person name="Bolanos R."/>
            <person name="Fasulo D."/>
            <person name="Halldorsson B.V."/>
            <person name="Hannenhalli S."/>
            <person name="Turner R."/>
            <person name="Yooseph S."/>
            <person name="Lu F."/>
            <person name="Nusskern D.R."/>
            <person name="Shue B.C."/>
            <person name="Zheng X.H."/>
            <person name="Zhong F."/>
            <person name="Delcher A.L."/>
            <person name="Huson D.H."/>
            <person name="Kravitz S.A."/>
            <person name="Mouchard L."/>
            <person name="Reinert K."/>
            <person name="Remington K.A."/>
            <person name="Clark A.G."/>
            <person name="Waterman M.S."/>
            <person name="Eichler E.E."/>
            <person name="Adams M.D."/>
            <person name="Hunkapiller M.W."/>
            <person name="Myers E.W."/>
            <person name="Venter J.C."/>
        </authorList>
    </citation>
    <scope>NUCLEOTIDE SEQUENCE [LARGE SCALE GENOMIC DNA]</scope>
</reference>
<reference key="5">
    <citation type="journal article" date="2005" name="Int. J. Mol. Med.">
        <title>Identification and characterization of TMEM16H gene in silico.</title>
        <authorList>
            <person name="Katoh M."/>
            <person name="Katoh M."/>
        </authorList>
    </citation>
    <scope>ALTERNATIVE SPLICING (ISOFORMS 1 AND 2)</scope>
    <scope>TISSUE SPECIFICITY</scope>
</reference>
<reference key="6">
    <citation type="journal article" date="2010" name="J. Biol. Chem.">
        <title>Expression and function of epithelial anoctamins.</title>
        <authorList>
            <person name="Schreiber R."/>
            <person name="Uliyakina I."/>
            <person name="Kongsuphol P."/>
            <person name="Warth R."/>
            <person name="Mirza M."/>
            <person name="Martins J.R."/>
            <person name="Kunzelmann K."/>
        </authorList>
    </citation>
    <scope>ABSENCE OF CALCIUM-ACTIVATED CHLORIDE CHANNEL ACTIVITY</scope>
    <scope>SUBCELLULAR LOCATION</scope>
</reference>
<reference key="7">
    <citation type="journal article" date="2011" name="Acta Pharmacol. Sin.">
        <title>Physiological roles and diseases of Tmem16/Anoctamin proteins: are they all chloride channels?</title>
        <authorList>
            <person name="Duran C."/>
            <person name="Hartzell H.C."/>
        </authorList>
    </citation>
    <scope>REVIEW</scope>
</reference>
<reference key="8">
    <citation type="journal article" date="2011" name="Cell. Physiol. Biochem.">
        <title>CFTR and TMEM16A are separate but functionally related Cl-channels.</title>
        <authorList>
            <person name="Ousingsawat J."/>
            <person name="Kongsuphol P."/>
            <person name="Schreiber R."/>
            <person name="Kunzelmann K."/>
        </authorList>
    </citation>
    <scope>ABSENCE OF CALCIUM-ACTIVATED CHLORIDE CHANNEL ACTIVITY</scope>
</reference>
<reference key="9">
    <citation type="journal article" date="2011" name="Pflugers Arch.">
        <title>Anoctamins.</title>
        <authorList>
            <person name="Kunzelmann K."/>
            <person name="Tian Y."/>
            <person name="Martins J.R."/>
            <person name="Faria D."/>
            <person name="Kongsuphol P."/>
            <person name="Ousingsawat J."/>
            <person name="Thevenod F."/>
            <person name="Roussa E."/>
            <person name="Rock J."/>
            <person name="Schreiber R."/>
        </authorList>
    </citation>
    <scope>REVIEW</scope>
</reference>
<reference key="10">
    <citation type="journal article" date="2012" name="Exp. Physiol.">
        <title>The anoctamin (TMEM16) gene family: calcium-activated chloride channels come of age.</title>
        <authorList>
            <person name="Winpenny J.P."/>
            <person name="Gray M.A."/>
        </authorList>
    </citation>
    <scope>REVIEW</scope>
</reference>
<reference key="11">
    <citation type="journal article" date="2012" name="Exp. Physiol.">
        <title>The anoctamin family: TMEM16A and TMEM16B as calcium-activated chloride channels.</title>
        <authorList>
            <person name="Scudieri P."/>
            <person name="Sondo E."/>
            <person name="Ferrera L."/>
            <person name="Galietta L.J."/>
        </authorList>
    </citation>
    <scope>REVIEW</scope>
    <scope>ABSENCE OF CALCIUM-ACTIVATED CHLORIDE CHANNEL ACTIVITY</scope>
</reference>
<reference key="12">
    <citation type="journal article" date="2012" name="J. Cell Sci.">
        <title>Anoctamins are a family of Ca2+ activated Cl- channels.</title>
        <authorList>
            <person name="Tian Y."/>
            <person name="Schreiber R."/>
            <person name="Kunzelmann K."/>
        </authorList>
    </citation>
    <scope>SUBCELLULAR LOCATION</scope>
</reference>
<reference key="13">
    <citation type="journal article" date="2012" name="Proc. Natl. Acad. Sci. U.S.A.">
        <title>N-terminal acetylome analyses and functional insights of the N-terminal acetyltransferase NatB.</title>
        <authorList>
            <person name="Van Damme P."/>
            <person name="Lasa M."/>
            <person name="Polevoda B."/>
            <person name="Gazquez C."/>
            <person name="Elosegui-Artola A."/>
            <person name="Kim D.S."/>
            <person name="De Juan-Pardo E."/>
            <person name="Demeyer K."/>
            <person name="Hole K."/>
            <person name="Larrea E."/>
            <person name="Timmerman E."/>
            <person name="Prieto J."/>
            <person name="Arnesen T."/>
            <person name="Sherman F."/>
            <person name="Gevaert K."/>
            <person name="Aldabe R."/>
        </authorList>
    </citation>
    <scope>ACETYLATION [LARGE SCALE ANALYSIS] AT ALA-2</scope>
    <scope>CLEAVAGE OF INITIATOR METHIONINE [LARGE SCALE ANALYSIS]</scope>
    <scope>IDENTIFICATION BY MASS SPECTROMETRY [LARGE SCALE ANALYSIS]</scope>
</reference>
<reference key="14">
    <citation type="journal article" date="2015" name="Cell">
        <title>A single kinase generates the majority of the secreted phosphoproteome.</title>
        <authorList>
            <person name="Tagliabracci V.S."/>
            <person name="Wiley S.E."/>
            <person name="Guo X."/>
            <person name="Kinch L.N."/>
            <person name="Durrant E."/>
            <person name="Wen J."/>
            <person name="Xiao J."/>
            <person name="Cui J."/>
            <person name="Nguyen K.B."/>
            <person name="Engel J.L."/>
            <person name="Coon J.J."/>
            <person name="Grishin N."/>
            <person name="Pinna L.A."/>
            <person name="Pagliarini D.J."/>
            <person name="Dixon J.E."/>
        </authorList>
    </citation>
    <scope>PHOSPHORYLATION AT SER-801</scope>
</reference>
<comment type="function">
    <text>Does not exhibit calcium-activated chloride channel (CaCC) activity.</text>
</comment>
<comment type="subcellular location">
    <subcellularLocation>
        <location evidence="5 6">Cell membrane</location>
        <topology evidence="5 6">Multi-pass membrane protein</topology>
    </subcellularLocation>
    <text>Shows predominantly an intracellular localization with a weak expression in the cell membrane.</text>
</comment>
<comment type="alternative products">
    <event type="alternative splicing"/>
    <isoform>
        <id>Q9HCE9-1</id>
        <name>1</name>
        <sequence type="displayed"/>
    </isoform>
    <isoform>
        <id>Q9HCE9-2</id>
        <name>2</name>
        <sequence type="described" ref="VSP_020351 VSP_020352"/>
    </isoform>
</comment>
<comment type="tissue specificity">
    <text evidence="4">Expressed in embryonic stem cells, fetal brain and neural tissues.</text>
</comment>
<comment type="miscellaneous">
    <text>The term 'anoctamin' was coined because these channels are anion selective and have eight (OCT) transmembrane segments. There is some dissatisfaction in the field with the Ano nomenclature because it is not certain that all the members of this family are anion channels or have the 8-transmembrane topology.</text>
</comment>
<comment type="similarity">
    <text evidence="8">Belongs to the anoctamin family.</text>
</comment>
<comment type="sequence caution" evidence="8">
    <conflict type="erroneous initiation">
        <sequence resource="EMBL-CDS" id="BAB13449"/>
    </conflict>
    <text>Extended N-terminus.</text>
</comment>
<accession>Q9HCE9</accession>
<accession>A6NIJ0</accession>
<evidence type="ECO:0000250" key="1">
    <source>
        <dbReference type="UniProtKB" id="Q6PB70"/>
    </source>
</evidence>
<evidence type="ECO:0000255" key="2"/>
<evidence type="ECO:0000256" key="3">
    <source>
        <dbReference type="SAM" id="MobiDB-lite"/>
    </source>
</evidence>
<evidence type="ECO:0000269" key="4">
    <source>
    </source>
</evidence>
<evidence type="ECO:0000269" key="5">
    <source>
    </source>
</evidence>
<evidence type="ECO:0000269" key="6">
    <source>
    </source>
</evidence>
<evidence type="ECO:0000269" key="7">
    <source>
    </source>
</evidence>
<evidence type="ECO:0000305" key="8"/>
<evidence type="ECO:0007744" key="9">
    <source>
    </source>
</evidence>
<dbReference type="EMBL" id="AB046843">
    <property type="protein sequence ID" value="BAB13449.2"/>
    <property type="status" value="ALT_INIT"/>
    <property type="molecule type" value="mRNA"/>
</dbReference>
<dbReference type="EMBL" id="AC010463">
    <property type="status" value="NOT_ANNOTATED_CDS"/>
    <property type="molecule type" value="Genomic_DNA"/>
</dbReference>
<dbReference type="EMBL" id="CH471106">
    <property type="protein sequence ID" value="EAW84595.1"/>
    <property type="molecule type" value="Genomic_DNA"/>
</dbReference>
<dbReference type="CCDS" id="CCDS32949.1">
    <molecule id="Q9HCE9-1"/>
</dbReference>
<dbReference type="RefSeq" id="NP_066010.1">
    <molecule id="Q9HCE9-1"/>
    <property type="nucleotide sequence ID" value="NM_020959.3"/>
</dbReference>
<dbReference type="RefSeq" id="XP_016882537.1">
    <property type="nucleotide sequence ID" value="XM_017027048.1"/>
</dbReference>
<dbReference type="SMR" id="Q9HCE9"/>
<dbReference type="BioGRID" id="121742">
    <property type="interactions" value="16"/>
</dbReference>
<dbReference type="FunCoup" id="Q9HCE9">
    <property type="interactions" value="619"/>
</dbReference>
<dbReference type="IntAct" id="Q9HCE9">
    <property type="interactions" value="2"/>
</dbReference>
<dbReference type="MINT" id="Q9HCE9"/>
<dbReference type="STRING" id="9606.ENSP00000159087"/>
<dbReference type="TCDB" id="1.A.17.1.31">
    <property type="family name" value="the calcium-dependent chloride channel (ca-clc) family"/>
</dbReference>
<dbReference type="GlyGen" id="Q9HCE9">
    <property type="glycosylation" value="2 sites"/>
</dbReference>
<dbReference type="iPTMnet" id="Q9HCE9"/>
<dbReference type="PhosphoSitePlus" id="Q9HCE9"/>
<dbReference type="SwissPalm" id="Q9HCE9"/>
<dbReference type="BioMuta" id="ANO8"/>
<dbReference type="DMDM" id="114152287"/>
<dbReference type="jPOST" id="Q9HCE9"/>
<dbReference type="MassIVE" id="Q9HCE9"/>
<dbReference type="PaxDb" id="9606-ENSP00000159087"/>
<dbReference type="PeptideAtlas" id="Q9HCE9"/>
<dbReference type="ProteomicsDB" id="81695">
    <molecule id="Q9HCE9-1"/>
</dbReference>
<dbReference type="ProteomicsDB" id="81696">
    <molecule id="Q9HCE9-2"/>
</dbReference>
<dbReference type="Antibodypedia" id="43758">
    <property type="antibodies" value="24 antibodies from 13 providers"/>
</dbReference>
<dbReference type="DNASU" id="57719"/>
<dbReference type="Ensembl" id="ENST00000159087.7">
    <molecule id="Q9HCE9-1"/>
    <property type="protein sequence ID" value="ENSP00000159087.4"/>
    <property type="gene ID" value="ENSG00000074855.11"/>
</dbReference>
<dbReference type="GeneID" id="57719"/>
<dbReference type="KEGG" id="hsa:57719"/>
<dbReference type="MANE-Select" id="ENST00000159087.7">
    <property type="protein sequence ID" value="ENSP00000159087.4"/>
    <property type="RefSeq nucleotide sequence ID" value="NM_020959.3"/>
    <property type="RefSeq protein sequence ID" value="NP_066010.1"/>
</dbReference>
<dbReference type="UCSC" id="uc002ngf.2">
    <molecule id="Q9HCE9-1"/>
    <property type="organism name" value="human"/>
</dbReference>
<dbReference type="AGR" id="HGNC:29329"/>
<dbReference type="CTD" id="57719"/>
<dbReference type="DisGeNET" id="57719"/>
<dbReference type="GeneCards" id="ANO8"/>
<dbReference type="HGNC" id="HGNC:29329">
    <property type="gene designation" value="ANO8"/>
</dbReference>
<dbReference type="HPA" id="ENSG00000074855">
    <property type="expression patterns" value="Tissue enhanced (brain)"/>
</dbReference>
<dbReference type="MIM" id="610216">
    <property type="type" value="gene"/>
</dbReference>
<dbReference type="neXtProt" id="NX_Q9HCE9"/>
<dbReference type="OpenTargets" id="ENSG00000074855"/>
<dbReference type="PharmGKB" id="PA164715790"/>
<dbReference type="VEuPathDB" id="HostDB:ENSG00000074855"/>
<dbReference type="eggNOG" id="KOG2513">
    <property type="taxonomic scope" value="Eukaryota"/>
</dbReference>
<dbReference type="GeneTree" id="ENSGT00940000157019"/>
<dbReference type="HOGENOM" id="CLU_006685_2_1_1"/>
<dbReference type="InParanoid" id="Q9HCE9"/>
<dbReference type="OMA" id="YLIHVAV"/>
<dbReference type="OrthoDB" id="296386at2759"/>
<dbReference type="PAN-GO" id="Q9HCE9">
    <property type="GO annotations" value="2 GO annotations based on evolutionary models"/>
</dbReference>
<dbReference type="PhylomeDB" id="Q9HCE9"/>
<dbReference type="TreeFam" id="TF314265"/>
<dbReference type="PathwayCommons" id="Q9HCE9"/>
<dbReference type="Reactome" id="R-HSA-2672351">
    <property type="pathway name" value="Stimuli-sensing channels"/>
</dbReference>
<dbReference type="Reactome" id="R-HSA-381426">
    <property type="pathway name" value="Regulation of Insulin-like Growth Factor (IGF) transport and uptake by Insulin-like Growth Factor Binding Proteins (IGFBPs)"/>
</dbReference>
<dbReference type="Reactome" id="R-HSA-8957275">
    <property type="pathway name" value="Post-translational protein phosphorylation"/>
</dbReference>
<dbReference type="Reactome" id="R-HSA-9733458">
    <property type="pathway name" value="Induction of Cell-Cell Fusion"/>
</dbReference>
<dbReference type="SignaLink" id="Q9HCE9"/>
<dbReference type="BioGRID-ORCS" id="57719">
    <property type="hits" value="14 hits in 1160 CRISPR screens"/>
</dbReference>
<dbReference type="ChiTaRS" id="ANO8">
    <property type="organism name" value="human"/>
</dbReference>
<dbReference type="GenomeRNAi" id="57719"/>
<dbReference type="Pharos" id="Q9HCE9">
    <property type="development level" value="Tbio"/>
</dbReference>
<dbReference type="PRO" id="PR:Q9HCE9"/>
<dbReference type="Proteomes" id="UP000005640">
    <property type="component" value="Chromosome 19"/>
</dbReference>
<dbReference type="RNAct" id="Q9HCE9">
    <property type="molecule type" value="protein"/>
</dbReference>
<dbReference type="Bgee" id="ENSG00000074855">
    <property type="expression patterns" value="Expressed in cortical plate and 97 other cell types or tissues"/>
</dbReference>
<dbReference type="ExpressionAtlas" id="Q9HCE9">
    <property type="expression patterns" value="baseline and differential"/>
</dbReference>
<dbReference type="GO" id="GO:0005788">
    <property type="term" value="C:endoplasmic reticulum lumen"/>
    <property type="evidence" value="ECO:0000304"/>
    <property type="project" value="Reactome"/>
</dbReference>
<dbReference type="GO" id="GO:0005886">
    <property type="term" value="C:plasma membrane"/>
    <property type="evidence" value="ECO:0000314"/>
    <property type="project" value="UniProtKB"/>
</dbReference>
<dbReference type="GO" id="GO:0005254">
    <property type="term" value="F:chloride channel activity"/>
    <property type="evidence" value="ECO:0000318"/>
    <property type="project" value="GO_Central"/>
</dbReference>
<dbReference type="GO" id="GO:0005229">
    <property type="term" value="F:intracellularly calcium-gated chloride channel activity"/>
    <property type="evidence" value="ECO:0000315"/>
    <property type="project" value="UniProtKB"/>
</dbReference>
<dbReference type="GO" id="GO:1902476">
    <property type="term" value="P:chloride transmembrane transport"/>
    <property type="evidence" value="ECO:0000315"/>
    <property type="project" value="UniProtKB"/>
</dbReference>
<dbReference type="GO" id="GO:0034220">
    <property type="term" value="P:monoatomic ion transmembrane transport"/>
    <property type="evidence" value="ECO:0000304"/>
    <property type="project" value="Reactome"/>
</dbReference>
<dbReference type="InterPro" id="IPR007632">
    <property type="entry name" value="Anoctamin"/>
</dbReference>
<dbReference type="InterPro" id="IPR049452">
    <property type="entry name" value="Anoctamin_TM"/>
</dbReference>
<dbReference type="PANTHER" id="PTHR12308">
    <property type="entry name" value="ANOCTAMIN"/>
    <property type="match status" value="1"/>
</dbReference>
<dbReference type="PANTHER" id="PTHR12308:SF51">
    <property type="entry name" value="ANOCTAMIN-8"/>
    <property type="match status" value="1"/>
</dbReference>
<dbReference type="Pfam" id="PF04547">
    <property type="entry name" value="Anoctamin"/>
    <property type="match status" value="2"/>
</dbReference>
<proteinExistence type="evidence at protein level"/>
<sequence>MAEAASGAGGTSLEGERGKRPPPEGEPAAPASGVLDKLFGKRLLQAGRYLVSHKAWMKTVPTENCDVLMTFPDTTDDHTLLWLLNHIRVGIPELIVQVRHHRHTRAYAFFVTATYESLLRGADELGLRKAVKAEFGGGTRGFSCEEDFIYENVESELRFFTSQERQSIIRFWLQNLRAKQGEALHNVRFLEDQPIIPELAARGIIQQVFPVHEQRILNRLMKSWVQAVCENQPLDDICDYFGVKIAMYFAWLGFYTSAMVYPAVFGSVLYTFTEADQTSRDVSCVVFALFNVIWSTLFLEEWKRRGAELAYKWGTLDSPGEAVEEPRPQFRGVRRISPITRAEEFYYPPWKRLLFQLLVSLPLCLACLVCVFLLMLGCFQLQELVLSVKGLPRLARFLPKVMLALLVSVSAEGYKKLAIWLNDMENYRLESAYEKHLIIKVVLFQFVNSYLSLFYIGFYLKDMERLKEMLATLLITRQFLQNVREVLQPHLYRRLGRGELGLRAVWELARALLGLLSLRRPAPRRLEPQADEGGGGGSGGGGRRCLSGGCGAPEEEEEAALVERRRAGEGGEEGDGPPGGKEEDEDDEEEEDEEEEEDEEEGEEGGLLDCGLRLKKVSFAERGAGRRRPGPSPEALLEEGSPTMVEKGLEPGVFTLAEEDDEAEGAPGSPEREPPAILFRRAGGEGRDQGPDGGPDPEPGSNSDSTRRQRRQNRSSWIDPPEEEHSPQLTQAELESCMKKYEDTFQDYQEMFVQFGYVVLFSSAFPLAALCALVNNLIEIRSDAFKLCTGLQRPFGQRVESIGQWQKVMEAMGVLAIVVNCYLIGQCGQLQRLFPWLSPEAAIVSVVVLEHFALLLKYLIHVAIPDIPGWVAEEMAKLEYQRREAFKRHERQAQHRYQQQQRRRREEEERQRHAEHHARREHDSGGREEARAEGSGLDPATSSEKASAKAKGSTAGGHGPERPKRPGSLLAPNNVMKLKQIIPLQGKFLSSGATSSLAAAGAGATTRPPPAQSPTGSDTRLPAFLSFKFLKSPETRRDSERSHSPPKAFHAGKLFPFGGTRAEPGSNGAGGQARPDGTPSSGSSRVQRSGPVDEALAEELEAPRPEEEGSGTALAPVGAPALRTRRSRSPAPPPPMPLPRPPTPPAGCWQWDGPWGCGGEGAAPRQALAAAECPPCAMAGPPPAPQPLPGDASFYSLPPPPLPPTSDPLETPAPSPSPSPSPQAVCWPSGWH</sequence>
<protein>
    <recommendedName>
        <fullName>Anoctamin-8</fullName>
    </recommendedName>
    <alternativeName>
        <fullName>Transmembrane protein 16H</fullName>
    </alternativeName>
</protein>